<proteinExistence type="inferred from homology"/>
<name>ARGB_PROMM</name>
<feature type="chain" id="PRO_0000112648" description="Acetylglutamate kinase">
    <location>
        <begin position="1"/>
        <end position="308"/>
    </location>
</feature>
<feature type="binding site" evidence="1">
    <location>
        <begin position="86"/>
        <end position="87"/>
    </location>
    <ligand>
        <name>substrate</name>
    </ligand>
</feature>
<feature type="binding site" evidence="1">
    <location>
        <position position="108"/>
    </location>
    <ligand>
        <name>substrate</name>
    </ligand>
</feature>
<feature type="binding site" evidence="1">
    <location>
        <position position="201"/>
    </location>
    <ligand>
        <name>substrate</name>
    </ligand>
</feature>
<feature type="site" description="Transition state stabilizer" evidence="1">
    <location>
        <position position="51"/>
    </location>
</feature>
<feature type="site" description="Transition state stabilizer" evidence="1">
    <location>
        <position position="264"/>
    </location>
</feature>
<dbReference type="EC" id="2.7.2.8" evidence="1"/>
<dbReference type="EMBL" id="BX548175">
    <property type="protein sequence ID" value="CAE21443.1"/>
    <property type="molecule type" value="Genomic_DNA"/>
</dbReference>
<dbReference type="RefSeq" id="WP_011130637.1">
    <property type="nucleotide sequence ID" value="NC_005071.1"/>
</dbReference>
<dbReference type="SMR" id="Q7TUU2"/>
<dbReference type="KEGG" id="pmt:PMT_1268"/>
<dbReference type="eggNOG" id="COG0548">
    <property type="taxonomic scope" value="Bacteria"/>
</dbReference>
<dbReference type="HOGENOM" id="CLU_053680_0_0_3"/>
<dbReference type="OrthoDB" id="9803155at2"/>
<dbReference type="UniPathway" id="UPA00068">
    <property type="reaction ID" value="UER00107"/>
</dbReference>
<dbReference type="Proteomes" id="UP000001423">
    <property type="component" value="Chromosome"/>
</dbReference>
<dbReference type="GO" id="GO:0005737">
    <property type="term" value="C:cytoplasm"/>
    <property type="evidence" value="ECO:0007669"/>
    <property type="project" value="UniProtKB-SubCell"/>
</dbReference>
<dbReference type="GO" id="GO:0003991">
    <property type="term" value="F:acetylglutamate kinase activity"/>
    <property type="evidence" value="ECO:0007669"/>
    <property type="project" value="UniProtKB-UniRule"/>
</dbReference>
<dbReference type="GO" id="GO:0005524">
    <property type="term" value="F:ATP binding"/>
    <property type="evidence" value="ECO:0007669"/>
    <property type="project" value="UniProtKB-UniRule"/>
</dbReference>
<dbReference type="GO" id="GO:0042450">
    <property type="term" value="P:arginine biosynthetic process via ornithine"/>
    <property type="evidence" value="ECO:0007669"/>
    <property type="project" value="UniProtKB-UniRule"/>
</dbReference>
<dbReference type="GO" id="GO:0006526">
    <property type="term" value="P:L-arginine biosynthetic process"/>
    <property type="evidence" value="ECO:0007669"/>
    <property type="project" value="UniProtKB-UniPathway"/>
</dbReference>
<dbReference type="CDD" id="cd04250">
    <property type="entry name" value="AAK_NAGK-C"/>
    <property type="match status" value="1"/>
</dbReference>
<dbReference type="FunFam" id="3.40.1160.10:FF:000004">
    <property type="entry name" value="Acetylglutamate kinase"/>
    <property type="match status" value="1"/>
</dbReference>
<dbReference type="Gene3D" id="3.40.1160.10">
    <property type="entry name" value="Acetylglutamate kinase-like"/>
    <property type="match status" value="1"/>
</dbReference>
<dbReference type="HAMAP" id="MF_00082">
    <property type="entry name" value="ArgB"/>
    <property type="match status" value="1"/>
</dbReference>
<dbReference type="InterPro" id="IPR036393">
    <property type="entry name" value="AceGlu_kinase-like_sf"/>
</dbReference>
<dbReference type="InterPro" id="IPR004662">
    <property type="entry name" value="AcgluKinase_fam"/>
</dbReference>
<dbReference type="InterPro" id="IPR037528">
    <property type="entry name" value="ArgB"/>
</dbReference>
<dbReference type="InterPro" id="IPR001048">
    <property type="entry name" value="Asp/Glu/Uridylate_kinase"/>
</dbReference>
<dbReference type="InterPro" id="IPR001057">
    <property type="entry name" value="Glu/AcGlu_kinase"/>
</dbReference>
<dbReference type="InterPro" id="IPR041727">
    <property type="entry name" value="NAGK-C"/>
</dbReference>
<dbReference type="NCBIfam" id="TIGR00761">
    <property type="entry name" value="argB"/>
    <property type="match status" value="1"/>
</dbReference>
<dbReference type="PANTHER" id="PTHR23342">
    <property type="entry name" value="N-ACETYLGLUTAMATE SYNTHASE"/>
    <property type="match status" value="1"/>
</dbReference>
<dbReference type="PANTHER" id="PTHR23342:SF0">
    <property type="entry name" value="N-ACETYLGLUTAMATE SYNTHASE, MITOCHONDRIAL"/>
    <property type="match status" value="1"/>
</dbReference>
<dbReference type="Pfam" id="PF00696">
    <property type="entry name" value="AA_kinase"/>
    <property type="match status" value="1"/>
</dbReference>
<dbReference type="PIRSF" id="PIRSF000728">
    <property type="entry name" value="NAGK"/>
    <property type="match status" value="1"/>
</dbReference>
<dbReference type="PRINTS" id="PR00474">
    <property type="entry name" value="GLU5KINASE"/>
</dbReference>
<dbReference type="SUPFAM" id="SSF53633">
    <property type="entry name" value="Carbamate kinase-like"/>
    <property type="match status" value="1"/>
</dbReference>
<accession>Q7TUU2</accession>
<sequence>MESAKSAAALVEPCQTNSARRLTEDDSLRVSVLSEALPYIQRFSGRRIVIKYGGAAMAHANLQEAVFRDLALLVSVGVEPVVVHGGGPEINQWLERLEIPAQFRDGLRVTDADTMDVVEMVLVGRVNKQIVNGLNQLGAKAVGLSGSDGNLVEARPWGDGSHGFVGDVARVNTDVLEPILAKGYVPVISSVAATVEGCSHNINADTVAGEIAAALEAEKLILLTDTPGILLDRDDPSSLVHQLRLSEARQLITEGVVAGGMTPKTECCIRALAQGVGAAHIIDGRVPHALLLEVFTDAGIGTMVVGRS</sequence>
<reference key="1">
    <citation type="journal article" date="2003" name="Nature">
        <title>Genome divergence in two Prochlorococcus ecotypes reflects oceanic niche differentiation.</title>
        <authorList>
            <person name="Rocap G."/>
            <person name="Larimer F.W."/>
            <person name="Lamerdin J.E."/>
            <person name="Malfatti S."/>
            <person name="Chain P."/>
            <person name="Ahlgren N.A."/>
            <person name="Arellano A."/>
            <person name="Coleman M."/>
            <person name="Hauser L."/>
            <person name="Hess W.R."/>
            <person name="Johnson Z.I."/>
            <person name="Land M.L."/>
            <person name="Lindell D."/>
            <person name="Post A.F."/>
            <person name="Regala W."/>
            <person name="Shah M."/>
            <person name="Shaw S.L."/>
            <person name="Steglich C."/>
            <person name="Sullivan M.B."/>
            <person name="Ting C.S."/>
            <person name="Tolonen A."/>
            <person name="Webb E.A."/>
            <person name="Zinser E.R."/>
            <person name="Chisholm S.W."/>
        </authorList>
    </citation>
    <scope>NUCLEOTIDE SEQUENCE [LARGE SCALE GENOMIC DNA]</scope>
    <source>
        <strain>MIT 9313</strain>
    </source>
</reference>
<comment type="function">
    <text evidence="1">Catalyzes the ATP-dependent phosphorylation of N-acetyl-L-glutamate.</text>
</comment>
<comment type="catalytic activity">
    <reaction evidence="1">
        <text>N-acetyl-L-glutamate + ATP = N-acetyl-L-glutamyl 5-phosphate + ADP</text>
        <dbReference type="Rhea" id="RHEA:14629"/>
        <dbReference type="ChEBI" id="CHEBI:30616"/>
        <dbReference type="ChEBI" id="CHEBI:44337"/>
        <dbReference type="ChEBI" id="CHEBI:57936"/>
        <dbReference type="ChEBI" id="CHEBI:456216"/>
        <dbReference type="EC" id="2.7.2.8"/>
    </reaction>
</comment>
<comment type="pathway">
    <text evidence="1">Amino-acid biosynthesis; L-arginine biosynthesis; N(2)-acetyl-L-ornithine from L-glutamate: step 2/4.</text>
</comment>
<comment type="subcellular location">
    <subcellularLocation>
        <location evidence="1">Cytoplasm</location>
    </subcellularLocation>
</comment>
<comment type="similarity">
    <text evidence="1">Belongs to the acetylglutamate kinase family. ArgB subfamily.</text>
</comment>
<evidence type="ECO:0000255" key="1">
    <source>
        <dbReference type="HAMAP-Rule" id="MF_00082"/>
    </source>
</evidence>
<keyword id="KW-0028">Amino-acid biosynthesis</keyword>
<keyword id="KW-0055">Arginine biosynthesis</keyword>
<keyword id="KW-0067">ATP-binding</keyword>
<keyword id="KW-0963">Cytoplasm</keyword>
<keyword id="KW-0418">Kinase</keyword>
<keyword id="KW-0547">Nucleotide-binding</keyword>
<keyword id="KW-1185">Reference proteome</keyword>
<keyword id="KW-0808">Transferase</keyword>
<protein>
    <recommendedName>
        <fullName evidence="1">Acetylglutamate kinase</fullName>
        <ecNumber evidence="1">2.7.2.8</ecNumber>
    </recommendedName>
    <alternativeName>
        <fullName evidence="1">N-acetyl-L-glutamate 5-phosphotransferase</fullName>
    </alternativeName>
    <alternativeName>
        <fullName evidence="1">NAG kinase</fullName>
        <shortName evidence="1">NAGK</shortName>
    </alternativeName>
</protein>
<organism>
    <name type="scientific">Prochlorococcus marinus (strain MIT 9313)</name>
    <dbReference type="NCBI Taxonomy" id="74547"/>
    <lineage>
        <taxon>Bacteria</taxon>
        <taxon>Bacillati</taxon>
        <taxon>Cyanobacteriota</taxon>
        <taxon>Cyanophyceae</taxon>
        <taxon>Synechococcales</taxon>
        <taxon>Prochlorococcaceae</taxon>
        <taxon>Prochlorococcus</taxon>
    </lineage>
</organism>
<gene>
    <name evidence="1" type="primary">argB</name>
    <name type="ordered locus">PMT_1268</name>
</gene>